<sequence>MQIQKMFEKEINRDIKGVIKVGQDDDKNIYQELDEYVVTNELLHHMGEFFKSYKKGITGHTDKMGVWISGFFGSGKSHFLKILSYLLENKHVMDENEINKDAISFFNNKILDPMVLADMKLAGNTTTDVILFNIDSKSESDSKSDKNAIVKVFNKVFNEMQGFCGSIPWIADLERQMVKDGRYEEFKAEFEKISGNTWEEAREDFYYEEDSIIEALSKTTKMSEDAARNWYERAEEDYFISIDRFAKRVREYVEAKGNNHHVVFLIDELGQYIGNDSQLMLNLQTVVEDIGTQCGGKVWVLVTSQQDIDSVVKVNGNDFSKIQGRFDTRLSLSSAHVDEVIKKRILLKNEVGKQTLRLLYGDNSSILKNLITFSGDTAEMKIFNNEEDFVDVYPFIPYQFNLLQKVFTGIRIHGASGKHLAEGERSLLSAFQESAMKYAESETGALIPFSAFYQTIEAFLDSSIRTVIIHAQNNSRLNAYDVEVLKLLFLIKYVKELPANLENLATLMIQNISDDKIELKKKIESSLIRLSKETLIQKNGQEYIFLTNDEQDVNREIKNMHVDSAEVIQKIGDVIFNVVYQDKKYRYSPKYHFSFNTIIDDRPIGMQTNDIGLKIITPYFDATTELNDSELKMMSMRESNVILKLPQDTSYLDEMTEILRIQAYLKIKSGTAASQAIEDIKVRKSREANERKDRVHIYITEALKHAQIFVNSQQLDVKEKNPVERINDAFKVLIDNLYNKLHYVKKFIDTAKQLNELLVENTTQLTLSDDNEDANQLAVKEVNDYITRLTTRNQQITIKGITTHFTKQPYGWKDLDIASFIIKLFKGQEIKLQLNSSNLTTSERDLVNYITKRDYVERVVVKKRERISPALMKVVKDLSKEVFEVTALPDDEDGLMNRFKELLVSEKNKINVLLVQYRNTFYPGQDVLQDGKESIEQLLNISDTTSFYNKVKQLQNDFLDYAEDVEPVKAFFETQRDIYDDAVKRLNIFEKNQTYVTDQKVTGFIESISKIVKHKEPYKNIHQLPGLIKEFDELFVELLEKECEPVKNVIESDYQTVLEELNKHEEIKSMFFNKFKNSFDGIKDRLNRVNNFYEAIAMQTESDRLKVRCIDDIANEVERRKPPVTSPCTGTTCTTVIDPIVEYKAKKKTISKNTILRGTKTIENEEDIEAVLDEIRKQLQKELEDASVIKLV</sequence>
<dbReference type="EMBL" id="ABDL02000007">
    <property type="protein sequence ID" value="EDZ57474.1"/>
    <property type="molecule type" value="Genomic_DNA"/>
</dbReference>
<dbReference type="GO" id="GO:0051607">
    <property type="term" value="P:defense response to virus"/>
    <property type="evidence" value="ECO:0007669"/>
    <property type="project" value="UniProtKB-KW"/>
</dbReference>
<dbReference type="InterPro" id="IPR047679">
    <property type="entry name" value="BREX_BrxC"/>
</dbReference>
<dbReference type="InterPro" id="IPR027417">
    <property type="entry name" value="P-loop_NTPase"/>
</dbReference>
<dbReference type="NCBIfam" id="NF033441">
    <property type="entry name" value="BREX_BrxC"/>
    <property type="match status" value="1"/>
</dbReference>
<dbReference type="SUPFAM" id="SSF52540">
    <property type="entry name" value="P-loop containing nucleoside triphosphate hydrolases"/>
    <property type="match status" value="1"/>
</dbReference>
<keyword id="KW-0051">Antiviral defense</keyword>
<name>BRXC_BACCH</name>
<reference key="1">
    <citation type="submission" date="2008-09" db="EMBL/GenBank/DDBJ databases">
        <title>Genome sequence of Bacillus cereus H3081.97.</title>
        <authorList>
            <person name="Dodson R.J."/>
            <person name="Durkin A.S."/>
            <person name="Rosovitz M.J."/>
            <person name="Rasko D.A."/>
            <person name="Hoffmaster A."/>
            <person name="Ravel J."/>
            <person name="Sutton G."/>
        </authorList>
    </citation>
    <scope>NUCLEOTIDE SEQUENCE [LARGE SCALE GENOMIC DNA]</scope>
    <source>
        <strain>H3081.97</strain>
    </source>
</reference>
<reference key="2">
    <citation type="journal article" date="2015" name="EMBO J.">
        <title>BREX is a novel phage resistance system widespread in microbial genomes.</title>
        <authorList>
            <person name="Goldfarb T."/>
            <person name="Sberro H."/>
            <person name="Weinstock E."/>
            <person name="Cohen O."/>
            <person name="Doron S."/>
            <person name="Charpak-Amikam Y."/>
            <person name="Afik S."/>
            <person name="Ofir G."/>
            <person name="Sorek R."/>
        </authorList>
    </citation>
    <scope>FUNCTION IN ANTIVIRAL DEFENSE</scope>
    <scope>INDUCTION</scope>
    <scope>CLASSIFICATION AND NOMENCLATURE</scope>
    <source>
        <strain>H3081.97</strain>
    </source>
</reference>
<proteinExistence type="evidence at protein level"/>
<accession>P0DUF2</accession>
<comment type="function">
    <text evidence="1">BREX systems (bacteriophage exclusion) provide immunity against bacteriophage. A core protein of a type 1 BREX system. This system allows phage adsorption but prevents phage DNA replication, without degradation of the phage DNA. Methylation of bacterial DNA by PglX probably guides self/non-self discrimination. When the brxA-brxB-brxC-pglX and pglZ-brxL operons are transformed into a susceptible B.subtilis strain (BEST7003) they confer resistance to bacteriophages SPbeta, SP16, Zeta, phi3T and SP02 and partial protection to phages SP01 and SP82G (these include lytic and temperate phage). They do not protect against phages phi105, rho10 or rho14. Additionally confers a very slight reduction in efficiency of plasmid transformation.</text>
</comment>
<comment type="induction">
    <text evidence="1">Part of the brxA-brxB-brxC-pglX operon.</text>
</comment>
<comment type="similarity">
    <text evidence="3">Belongs to the BrxC family.</text>
</comment>
<evidence type="ECO:0000269" key="1">
    <source>
    </source>
</evidence>
<evidence type="ECO:0000303" key="2">
    <source>
    </source>
</evidence>
<evidence type="ECO:0000305" key="3"/>
<organism>
    <name type="scientific">Bacillus cereus (strain H3081.97)</name>
    <dbReference type="NCBI Taxonomy" id="451708"/>
    <lineage>
        <taxon>Bacteria</taxon>
        <taxon>Bacillati</taxon>
        <taxon>Bacillota</taxon>
        <taxon>Bacilli</taxon>
        <taxon>Bacillales</taxon>
        <taxon>Bacillaceae</taxon>
        <taxon>Bacillus</taxon>
        <taxon>Bacillus cereus group</taxon>
    </lineage>
</organism>
<gene>
    <name evidence="2" type="primary">brxC</name>
    <name type="synonym">BCH308197_0965</name>
</gene>
<feature type="chain" id="PRO_0000452157" description="Probable ATP-binding protein BrxC">
    <location>
        <begin position="1"/>
        <end position="1192"/>
    </location>
</feature>
<protein>
    <recommendedName>
        <fullName evidence="2">Probable ATP-binding protein BrxC</fullName>
    </recommendedName>
    <alternativeName>
        <fullName evidence="2">BREX protein BrxC</fullName>
    </alternativeName>
</protein>